<dbReference type="EC" id="2.7.1.2" evidence="1"/>
<dbReference type="EMBL" id="CP000738">
    <property type="protein sequence ID" value="ABR62190.1"/>
    <property type="molecule type" value="Genomic_DNA"/>
</dbReference>
<dbReference type="RefSeq" id="WP_012067571.1">
    <property type="nucleotide sequence ID" value="NC_009636.1"/>
</dbReference>
<dbReference type="RefSeq" id="YP_001329025.1">
    <property type="nucleotide sequence ID" value="NC_009636.1"/>
</dbReference>
<dbReference type="SMR" id="A6UEW0"/>
<dbReference type="STRING" id="366394.Smed_3369"/>
<dbReference type="KEGG" id="smd:Smed_3369"/>
<dbReference type="PATRIC" id="fig|366394.8.peg.6615"/>
<dbReference type="eggNOG" id="COG0837">
    <property type="taxonomic scope" value="Bacteria"/>
</dbReference>
<dbReference type="HOGENOM" id="CLU_042582_1_0_5"/>
<dbReference type="OrthoDB" id="9800595at2"/>
<dbReference type="Proteomes" id="UP000001108">
    <property type="component" value="Chromosome"/>
</dbReference>
<dbReference type="GO" id="GO:0005829">
    <property type="term" value="C:cytosol"/>
    <property type="evidence" value="ECO:0007669"/>
    <property type="project" value="TreeGrafter"/>
</dbReference>
<dbReference type="GO" id="GO:0005524">
    <property type="term" value="F:ATP binding"/>
    <property type="evidence" value="ECO:0007669"/>
    <property type="project" value="UniProtKB-UniRule"/>
</dbReference>
<dbReference type="GO" id="GO:0005536">
    <property type="term" value="F:D-glucose binding"/>
    <property type="evidence" value="ECO:0007669"/>
    <property type="project" value="InterPro"/>
</dbReference>
<dbReference type="GO" id="GO:0004340">
    <property type="term" value="F:glucokinase activity"/>
    <property type="evidence" value="ECO:0007669"/>
    <property type="project" value="UniProtKB-UniRule"/>
</dbReference>
<dbReference type="GO" id="GO:0006096">
    <property type="term" value="P:glycolytic process"/>
    <property type="evidence" value="ECO:0007669"/>
    <property type="project" value="UniProtKB-UniRule"/>
</dbReference>
<dbReference type="CDD" id="cd24008">
    <property type="entry name" value="ASKHA_NBD_GLK"/>
    <property type="match status" value="1"/>
</dbReference>
<dbReference type="Gene3D" id="3.30.420.40">
    <property type="match status" value="1"/>
</dbReference>
<dbReference type="Gene3D" id="3.40.367.20">
    <property type="match status" value="1"/>
</dbReference>
<dbReference type="HAMAP" id="MF_00524">
    <property type="entry name" value="Glucokinase"/>
    <property type="match status" value="1"/>
</dbReference>
<dbReference type="InterPro" id="IPR043129">
    <property type="entry name" value="ATPase_NBD"/>
</dbReference>
<dbReference type="InterPro" id="IPR050201">
    <property type="entry name" value="Bacterial_glucokinase"/>
</dbReference>
<dbReference type="InterPro" id="IPR003836">
    <property type="entry name" value="Glucokinase"/>
</dbReference>
<dbReference type="NCBIfam" id="TIGR00749">
    <property type="entry name" value="glk"/>
    <property type="match status" value="1"/>
</dbReference>
<dbReference type="NCBIfam" id="NF001417">
    <property type="entry name" value="PRK00292.1-4"/>
    <property type="match status" value="1"/>
</dbReference>
<dbReference type="PANTHER" id="PTHR47690">
    <property type="entry name" value="GLUCOKINASE"/>
    <property type="match status" value="1"/>
</dbReference>
<dbReference type="PANTHER" id="PTHR47690:SF1">
    <property type="entry name" value="GLUCOKINASE"/>
    <property type="match status" value="1"/>
</dbReference>
<dbReference type="Pfam" id="PF02685">
    <property type="entry name" value="Glucokinase"/>
    <property type="match status" value="1"/>
</dbReference>
<dbReference type="SUPFAM" id="SSF53067">
    <property type="entry name" value="Actin-like ATPase domain"/>
    <property type="match status" value="1"/>
</dbReference>
<evidence type="ECO:0000255" key="1">
    <source>
        <dbReference type="HAMAP-Rule" id="MF_00524"/>
    </source>
</evidence>
<reference key="1">
    <citation type="submission" date="2007-06" db="EMBL/GenBank/DDBJ databases">
        <title>Complete sequence of Sinorhizobium medicae WSM419 chromosome.</title>
        <authorList>
            <consortium name="US DOE Joint Genome Institute"/>
            <person name="Copeland A."/>
            <person name="Lucas S."/>
            <person name="Lapidus A."/>
            <person name="Barry K."/>
            <person name="Glavina del Rio T."/>
            <person name="Dalin E."/>
            <person name="Tice H."/>
            <person name="Pitluck S."/>
            <person name="Chain P."/>
            <person name="Malfatti S."/>
            <person name="Shin M."/>
            <person name="Vergez L."/>
            <person name="Schmutz J."/>
            <person name="Larimer F."/>
            <person name="Land M."/>
            <person name="Hauser L."/>
            <person name="Kyrpides N."/>
            <person name="Mikhailova N."/>
            <person name="Reeve W.G."/>
            <person name="Richardson P."/>
        </authorList>
    </citation>
    <scope>NUCLEOTIDE SEQUENCE [LARGE SCALE GENOMIC DNA]</scope>
    <source>
        <strain>WSM419</strain>
    </source>
</reference>
<feature type="chain" id="PRO_1000050977" description="Glucokinase">
    <location>
        <begin position="1"/>
        <end position="339"/>
    </location>
</feature>
<feature type="binding site" evidence="1">
    <location>
        <begin position="16"/>
        <end position="21"/>
    </location>
    <ligand>
        <name>ATP</name>
        <dbReference type="ChEBI" id="CHEBI:30616"/>
    </ligand>
</feature>
<name>GLK_SINMW</name>
<organism>
    <name type="scientific">Sinorhizobium medicae (strain WSM419)</name>
    <name type="common">Ensifer medicae</name>
    <dbReference type="NCBI Taxonomy" id="366394"/>
    <lineage>
        <taxon>Bacteria</taxon>
        <taxon>Pseudomonadati</taxon>
        <taxon>Pseudomonadota</taxon>
        <taxon>Alphaproteobacteria</taxon>
        <taxon>Hyphomicrobiales</taxon>
        <taxon>Rhizobiaceae</taxon>
        <taxon>Sinorhizobium/Ensifer group</taxon>
        <taxon>Sinorhizobium</taxon>
    </lineage>
</organism>
<proteinExistence type="inferred from homology"/>
<accession>A6UEW0</accession>
<sequence length="339" mass="35925">MPNASDQSFPFPILIGDIGGTNARFALLTDAYGEPRQLEPIRTGDFATIEEAMQKSILDKTSVQPRSAILAVAGPIKGDEIPLTNAHWVIRPKDMLASLGLEDVLIINDFEAQALAIAAPADQDVVQIGGGAVRPFNSRVVLGPGTGLGVAGLVYAQHSWIPVPGEGGHVDLGPRTERDFEIWPFLEPIEGRMAGEQILCGRGIMNLYRAVCAANGEAAVLADQAAVTTSALSGADAAAVETVSLFATYLGRVAGDMALIFMARGGVFLAGGISQKILPALMKPEFRAAFEDKAPHSALMRTIPTFAVIHPMAALSGLAAFARTPRDFGVAMEGRRWRR</sequence>
<gene>
    <name evidence="1" type="primary">glk</name>
    <name type="ordered locus">Smed_3369</name>
</gene>
<protein>
    <recommendedName>
        <fullName evidence="1">Glucokinase</fullName>
        <ecNumber evidence="1">2.7.1.2</ecNumber>
    </recommendedName>
    <alternativeName>
        <fullName evidence="1">Glucose kinase</fullName>
    </alternativeName>
</protein>
<comment type="catalytic activity">
    <reaction evidence="1">
        <text>D-glucose + ATP = D-glucose 6-phosphate + ADP + H(+)</text>
        <dbReference type="Rhea" id="RHEA:17825"/>
        <dbReference type="ChEBI" id="CHEBI:4167"/>
        <dbReference type="ChEBI" id="CHEBI:15378"/>
        <dbReference type="ChEBI" id="CHEBI:30616"/>
        <dbReference type="ChEBI" id="CHEBI:61548"/>
        <dbReference type="ChEBI" id="CHEBI:456216"/>
        <dbReference type="EC" id="2.7.1.2"/>
    </reaction>
</comment>
<comment type="subcellular location">
    <subcellularLocation>
        <location evidence="1">Cytoplasm</location>
    </subcellularLocation>
</comment>
<comment type="similarity">
    <text evidence="1">Belongs to the bacterial glucokinase family.</text>
</comment>
<keyword id="KW-0067">ATP-binding</keyword>
<keyword id="KW-0963">Cytoplasm</keyword>
<keyword id="KW-0324">Glycolysis</keyword>
<keyword id="KW-0418">Kinase</keyword>
<keyword id="KW-0547">Nucleotide-binding</keyword>
<keyword id="KW-0808">Transferase</keyword>